<evidence type="ECO:0000255" key="1">
    <source>
        <dbReference type="HAMAP-Rule" id="MF_00651"/>
    </source>
</evidence>
<sequence length="155" mass="16818">MPEAGAIRPDATVLGFDVGSRRIGVAVGTALGAGARAVAVINVHANGPDWVALDRVHKEWRPAGLVVGDPLTLDDKDQPARKRAHAFARELRERYALPVVLIDERSSSVEAAQRFARERADGRKRRRDADTLDAMAAAVIVERWLSAPEQATLLP</sequence>
<comment type="function">
    <text evidence="1">Could be a nuclease involved in processing of the 5'-end of pre-16S rRNA.</text>
</comment>
<comment type="subcellular location">
    <subcellularLocation>
        <location evidence="1">Cytoplasm</location>
    </subcellularLocation>
</comment>
<comment type="similarity">
    <text evidence="1">Belongs to the YqgF nuclease family.</text>
</comment>
<feature type="chain" id="PRO_0000172177" description="Putative pre-16S rRNA nuclease">
    <location>
        <begin position="1"/>
        <end position="155"/>
    </location>
</feature>
<name>YQGF_XANCP</name>
<accession>Q8P766</accession>
<dbReference type="EC" id="3.1.-.-" evidence="1"/>
<dbReference type="EMBL" id="AE008922">
    <property type="protein sequence ID" value="AAM42019.1"/>
    <property type="molecule type" value="Genomic_DNA"/>
</dbReference>
<dbReference type="RefSeq" id="NP_638095.1">
    <property type="nucleotide sequence ID" value="NC_003902.1"/>
</dbReference>
<dbReference type="SMR" id="Q8P766"/>
<dbReference type="STRING" id="190485.XCC2747"/>
<dbReference type="EnsemblBacteria" id="AAM42019">
    <property type="protein sequence ID" value="AAM42019"/>
    <property type="gene ID" value="XCC2747"/>
</dbReference>
<dbReference type="KEGG" id="xcc:XCC2747"/>
<dbReference type="PATRIC" id="fig|190485.4.peg.2933"/>
<dbReference type="eggNOG" id="COG0816">
    <property type="taxonomic scope" value="Bacteria"/>
</dbReference>
<dbReference type="HOGENOM" id="CLU_098240_3_2_6"/>
<dbReference type="OrthoDB" id="9796140at2"/>
<dbReference type="Proteomes" id="UP000001010">
    <property type="component" value="Chromosome"/>
</dbReference>
<dbReference type="GO" id="GO:0005737">
    <property type="term" value="C:cytoplasm"/>
    <property type="evidence" value="ECO:0007669"/>
    <property type="project" value="UniProtKB-SubCell"/>
</dbReference>
<dbReference type="GO" id="GO:0004518">
    <property type="term" value="F:nuclease activity"/>
    <property type="evidence" value="ECO:0007669"/>
    <property type="project" value="UniProtKB-KW"/>
</dbReference>
<dbReference type="GO" id="GO:0000967">
    <property type="term" value="P:rRNA 5'-end processing"/>
    <property type="evidence" value="ECO:0000318"/>
    <property type="project" value="GO_Central"/>
</dbReference>
<dbReference type="CDD" id="cd16964">
    <property type="entry name" value="YqgF"/>
    <property type="match status" value="1"/>
</dbReference>
<dbReference type="Gene3D" id="3.30.420.140">
    <property type="entry name" value="YqgF/RNase H-like domain"/>
    <property type="match status" value="1"/>
</dbReference>
<dbReference type="HAMAP" id="MF_00651">
    <property type="entry name" value="Nuclease_YqgF"/>
    <property type="match status" value="1"/>
</dbReference>
<dbReference type="InterPro" id="IPR012337">
    <property type="entry name" value="RNaseH-like_sf"/>
</dbReference>
<dbReference type="InterPro" id="IPR005227">
    <property type="entry name" value="YqgF"/>
</dbReference>
<dbReference type="InterPro" id="IPR006641">
    <property type="entry name" value="YqgF/RNaseH-like_dom"/>
</dbReference>
<dbReference type="InterPro" id="IPR037027">
    <property type="entry name" value="YqgF/RNaseH-like_dom_sf"/>
</dbReference>
<dbReference type="NCBIfam" id="TIGR00250">
    <property type="entry name" value="RNAse_H_YqgF"/>
    <property type="match status" value="1"/>
</dbReference>
<dbReference type="PANTHER" id="PTHR33317">
    <property type="entry name" value="POLYNUCLEOTIDYL TRANSFERASE, RIBONUCLEASE H-LIKE SUPERFAMILY PROTEIN"/>
    <property type="match status" value="1"/>
</dbReference>
<dbReference type="PANTHER" id="PTHR33317:SF4">
    <property type="entry name" value="POLYNUCLEOTIDYL TRANSFERASE, RIBONUCLEASE H-LIKE SUPERFAMILY PROTEIN"/>
    <property type="match status" value="1"/>
</dbReference>
<dbReference type="Pfam" id="PF03652">
    <property type="entry name" value="RuvX"/>
    <property type="match status" value="1"/>
</dbReference>
<dbReference type="SMART" id="SM00732">
    <property type="entry name" value="YqgFc"/>
    <property type="match status" value="1"/>
</dbReference>
<dbReference type="SUPFAM" id="SSF53098">
    <property type="entry name" value="Ribonuclease H-like"/>
    <property type="match status" value="1"/>
</dbReference>
<protein>
    <recommendedName>
        <fullName evidence="1">Putative pre-16S rRNA nuclease</fullName>
        <ecNumber evidence="1">3.1.-.-</ecNumber>
    </recommendedName>
</protein>
<organism>
    <name type="scientific">Xanthomonas campestris pv. campestris (strain ATCC 33913 / DSM 3586 / NCPPB 528 / LMG 568 / P 25)</name>
    <dbReference type="NCBI Taxonomy" id="190485"/>
    <lineage>
        <taxon>Bacteria</taxon>
        <taxon>Pseudomonadati</taxon>
        <taxon>Pseudomonadota</taxon>
        <taxon>Gammaproteobacteria</taxon>
        <taxon>Lysobacterales</taxon>
        <taxon>Lysobacteraceae</taxon>
        <taxon>Xanthomonas</taxon>
    </lineage>
</organism>
<proteinExistence type="inferred from homology"/>
<gene>
    <name type="ordered locus">XCC2747</name>
</gene>
<keyword id="KW-0963">Cytoplasm</keyword>
<keyword id="KW-0378">Hydrolase</keyword>
<keyword id="KW-0540">Nuclease</keyword>
<keyword id="KW-1185">Reference proteome</keyword>
<keyword id="KW-0690">Ribosome biogenesis</keyword>
<reference key="1">
    <citation type="journal article" date="2002" name="Nature">
        <title>Comparison of the genomes of two Xanthomonas pathogens with differing host specificities.</title>
        <authorList>
            <person name="da Silva A.C.R."/>
            <person name="Ferro J.A."/>
            <person name="Reinach F.C."/>
            <person name="Farah C.S."/>
            <person name="Furlan L.R."/>
            <person name="Quaggio R.B."/>
            <person name="Monteiro-Vitorello C.B."/>
            <person name="Van Sluys M.A."/>
            <person name="Almeida N.F. Jr."/>
            <person name="Alves L.M.C."/>
            <person name="do Amaral A.M."/>
            <person name="Bertolini M.C."/>
            <person name="Camargo L.E.A."/>
            <person name="Camarotte G."/>
            <person name="Cannavan F."/>
            <person name="Cardozo J."/>
            <person name="Chambergo F."/>
            <person name="Ciapina L.P."/>
            <person name="Cicarelli R.M.B."/>
            <person name="Coutinho L.L."/>
            <person name="Cursino-Santos J.R."/>
            <person name="El-Dorry H."/>
            <person name="Faria J.B."/>
            <person name="Ferreira A.J.S."/>
            <person name="Ferreira R.C.C."/>
            <person name="Ferro M.I.T."/>
            <person name="Formighieri E.F."/>
            <person name="Franco M.C."/>
            <person name="Greggio C.C."/>
            <person name="Gruber A."/>
            <person name="Katsuyama A.M."/>
            <person name="Kishi L.T."/>
            <person name="Leite R.P."/>
            <person name="Lemos E.G.M."/>
            <person name="Lemos M.V.F."/>
            <person name="Locali E.C."/>
            <person name="Machado M.A."/>
            <person name="Madeira A.M.B.N."/>
            <person name="Martinez-Rossi N.M."/>
            <person name="Martins E.C."/>
            <person name="Meidanis J."/>
            <person name="Menck C.F.M."/>
            <person name="Miyaki C.Y."/>
            <person name="Moon D.H."/>
            <person name="Moreira L.M."/>
            <person name="Novo M.T.M."/>
            <person name="Okura V.K."/>
            <person name="Oliveira M.C."/>
            <person name="Oliveira V.R."/>
            <person name="Pereira H.A."/>
            <person name="Rossi A."/>
            <person name="Sena J.A.D."/>
            <person name="Silva C."/>
            <person name="de Souza R.F."/>
            <person name="Spinola L.A.F."/>
            <person name="Takita M.A."/>
            <person name="Tamura R.E."/>
            <person name="Teixeira E.C."/>
            <person name="Tezza R.I.D."/>
            <person name="Trindade dos Santos M."/>
            <person name="Truffi D."/>
            <person name="Tsai S.M."/>
            <person name="White F.F."/>
            <person name="Setubal J.C."/>
            <person name="Kitajima J.P."/>
        </authorList>
    </citation>
    <scope>NUCLEOTIDE SEQUENCE [LARGE SCALE GENOMIC DNA]</scope>
    <source>
        <strain>ATCC 33913 / DSM 3586 / NCPPB 528 / LMG 568 / P 25</strain>
    </source>
</reference>